<comment type="function">
    <text evidence="3 4 5 6 7 8">Catalyzes the hydrolysis of the amide bond in N-(4-oxoglutarate)-L-cysteinylglycine (deaminated glutathione), a metabolite repair reaction to dispose of the harmful deaminated glutathione. Possesses amidase activity toward deaminated ophthalmate in vitro (PubMed:28373563). Plays a role in cell growth and apoptosis: loss of expression promotes cell growth, resistance to DNA damage stress and increased incidence to NMBA-induced tumors. Has tumor suppressor properties that enhances the apoptotic responsiveness in cancer cells; this effect is additive to the tumor suppressor activity of FHIT. It is also a negative regulator of primary T-cells.</text>
</comment>
<comment type="catalytic activity">
    <reaction evidence="8">
        <text>N-(4-oxoglutaryl)-L-cysteinylglycine + H2O = L-cysteinylglycine + 2-oxoglutarate</text>
        <dbReference type="Rhea" id="RHEA:54532"/>
        <dbReference type="ChEBI" id="CHEBI:15377"/>
        <dbReference type="ChEBI" id="CHEBI:16810"/>
        <dbReference type="ChEBI" id="CHEBI:61694"/>
        <dbReference type="ChEBI" id="CHEBI:138256"/>
        <dbReference type="EC" id="3.5.1.128"/>
    </reaction>
    <physiologicalReaction direction="left-to-right" evidence="8">
        <dbReference type="Rhea" id="RHEA:54533"/>
    </physiologicalReaction>
</comment>
<comment type="catalytic activity">
    <reaction evidence="8">
        <text>N-(4-carboxy-4-oxobutanoyl)-L-ethylglycylglycine + H2O = N-(2-aminobutanoyl)glycine + 2-oxoglutarate</text>
        <dbReference type="Rhea" id="RHEA:17125"/>
        <dbReference type="ChEBI" id="CHEBI:15377"/>
        <dbReference type="ChEBI" id="CHEBI:16810"/>
        <dbReference type="ChEBI" id="CHEBI:144697"/>
        <dbReference type="ChEBI" id="CHEBI:144699"/>
    </reaction>
    <physiologicalReaction direction="right-to-left" evidence="8">
        <dbReference type="Rhea" id="RHEA:17127"/>
    </physiologicalReaction>
</comment>
<comment type="biophysicochemical properties">
    <kinetics>
        <KM evidence="8">0.17 mM for N-(4-oxoglutarate)-L-cysteinylglycine (at pH 8.5)</KM>
        <Vmax evidence="8">2.6 umol/min/mg enzyme with N-(4-oxoglutarate)-L-cysteinylglycine as substrate (at pH 8.5)</Vmax>
        <text evidence="8">kcat is 1.6 sec(-1) with N-(4-oxoglutarate)-L-cysteinylglycine as substrate.</text>
    </kinetics>
</comment>
<comment type="subcellular location">
    <molecule>Isoform 1</molecule>
    <subcellularLocation>
        <location evidence="5 8">Mitochondrion</location>
    </subcellularLocation>
</comment>
<comment type="subcellular location">
    <molecule>Isoform 2</molecule>
    <subcellularLocation>
        <location evidence="5 8">Cytoplasm</location>
    </subcellularLocation>
</comment>
<comment type="alternative products">
    <event type="alternative splicing"/>
    <isoform>
        <id>Q8VDK1-1</id>
        <name>1</name>
        <sequence type="displayed"/>
    </isoform>
    <isoform>
        <id>Q8VDK1-2</id>
        <name>2</name>
        <sequence type="described" ref="VSP_011548"/>
    </isoform>
</comment>
<comment type="tissue specificity">
    <text evidence="3 9">Expressed in most tissues with higher expression in adult liver and kidney as well as in fetal adrenal gland and skeletal muscle.</text>
</comment>
<comment type="disruption phenotype">
    <text evidence="3 4">Mice are normal at birth as well as during growth. Mammary glands exhibit an increase in ductal and alveolar structures as well as more cyclin-D1 positive cells in mid-pregnancy. In the basal layer of epidermis, the number of cyclin-D1 positive cells is also higher. No lymphoid malignancy is observed. Kidney cells lacking Nit1 exhibit round and compact shapes, loss of lobular structure, higher cell density with increased S and G2/M cell populations. Cyclin D1 expression is increased, whereas differences in the other cell cycle-associated proteins appeared minimal. T-cells lacking NIT-1 display enhanced proliferation, elevated activation marker expression, accelerated cell cycle progression and aberrant expression of some cell cycle proteins.</text>
</comment>
<comment type="miscellaneous">
    <text>According to Rosetta Stone theory, the existence of a fusion protein in one genome predicts that the separate polypeptides expressed in other organisms function in the same cellular or biochemical pathway. In Drosophila melanogaster and Caenorhabditis elegans, NitFhit is a fusion protein composed of a C-terminal Fhit domain and a domain related to plant and bacterial nitrilase.</text>
</comment>
<comment type="similarity">
    <text evidence="11">Belongs to the carbon-nitrogen hydrolase superfamily. NIT1/NIT2 family.</text>
</comment>
<protein>
    <recommendedName>
        <fullName evidence="10">Deaminated glutathione amidase</fullName>
        <shortName evidence="10">dGSH amidase</shortName>
        <ecNumber evidence="8">3.5.1.128</ecNumber>
    </recommendedName>
    <alternativeName>
        <fullName evidence="11">Nitrilase homolog 1</fullName>
    </alternativeName>
</protein>
<organism>
    <name type="scientific">Mus musculus</name>
    <name type="common">Mouse</name>
    <dbReference type="NCBI Taxonomy" id="10090"/>
    <lineage>
        <taxon>Eukaryota</taxon>
        <taxon>Metazoa</taxon>
        <taxon>Chordata</taxon>
        <taxon>Craniata</taxon>
        <taxon>Vertebrata</taxon>
        <taxon>Euteleostomi</taxon>
        <taxon>Mammalia</taxon>
        <taxon>Eutheria</taxon>
        <taxon>Euarchontoglires</taxon>
        <taxon>Glires</taxon>
        <taxon>Rodentia</taxon>
        <taxon>Myomorpha</taxon>
        <taxon>Muroidea</taxon>
        <taxon>Muridae</taxon>
        <taxon>Murinae</taxon>
        <taxon>Mus</taxon>
        <taxon>Mus</taxon>
    </lineage>
</organism>
<keyword id="KW-0025">Alternative splicing</keyword>
<keyword id="KW-0963">Cytoplasm</keyword>
<keyword id="KW-0378">Hydrolase</keyword>
<keyword id="KW-0496">Mitochondrion</keyword>
<keyword id="KW-1185">Reference proteome</keyword>
<keyword id="KW-0809">Transit peptide</keyword>
<name>NIT1_MOUSE</name>
<gene>
    <name evidence="11" type="primary">Nit1</name>
</gene>
<dbReference type="EC" id="3.5.1.128" evidence="8"/>
<dbReference type="EMBL" id="AF069985">
    <property type="protein sequence ID" value="AAC40184.1"/>
    <property type="molecule type" value="Genomic_DNA"/>
</dbReference>
<dbReference type="EMBL" id="AF069988">
    <property type="protein sequence ID" value="AAC40185.1"/>
    <property type="molecule type" value="mRNA"/>
</dbReference>
<dbReference type="EMBL" id="BC021634">
    <property type="protein sequence ID" value="AAH21634.1"/>
    <property type="molecule type" value="mRNA"/>
</dbReference>
<dbReference type="CCDS" id="CCDS35775.1">
    <molecule id="Q8VDK1-1"/>
</dbReference>
<dbReference type="CCDS" id="CCDS56656.1">
    <molecule id="Q8VDK1-2"/>
</dbReference>
<dbReference type="RefSeq" id="NP_001229509.1">
    <molecule id="Q8VDK1-2"/>
    <property type="nucleotide sequence ID" value="NM_001242580.2"/>
</dbReference>
<dbReference type="RefSeq" id="NP_001407610.1">
    <molecule id="Q8VDK1-2"/>
    <property type="nucleotide sequence ID" value="NM_001420681.1"/>
</dbReference>
<dbReference type="RefSeq" id="NP_001407611.1">
    <molecule id="Q8VDK1-2"/>
    <property type="nucleotide sequence ID" value="NM_001420682.1"/>
</dbReference>
<dbReference type="RefSeq" id="NP_036179.1">
    <molecule id="Q8VDK1-1"/>
    <property type="nucleotide sequence ID" value="NM_012049.3"/>
</dbReference>
<dbReference type="RefSeq" id="XP_006496929.1">
    <property type="nucleotide sequence ID" value="XM_006496866.3"/>
</dbReference>
<dbReference type="SMR" id="Q8VDK1"/>
<dbReference type="FunCoup" id="Q8VDK1">
    <property type="interactions" value="2089"/>
</dbReference>
<dbReference type="STRING" id="10090.ENSMUSP00000106926"/>
<dbReference type="iPTMnet" id="Q8VDK1"/>
<dbReference type="PhosphoSitePlus" id="Q8VDK1"/>
<dbReference type="SwissPalm" id="Q8VDK1"/>
<dbReference type="CPTAC" id="non-CPTAC-3849"/>
<dbReference type="jPOST" id="Q8VDK1"/>
<dbReference type="PaxDb" id="10090-ENSMUSP00000106926"/>
<dbReference type="PeptideAtlas" id="Q8VDK1"/>
<dbReference type="ProteomicsDB" id="293564">
    <molecule id="Q8VDK1-1"/>
</dbReference>
<dbReference type="ProteomicsDB" id="293565">
    <molecule id="Q8VDK1-2"/>
</dbReference>
<dbReference type="Pumba" id="Q8VDK1"/>
<dbReference type="Antibodypedia" id="1672">
    <property type="antibodies" value="258 antibodies from 25 providers"/>
</dbReference>
<dbReference type="DNASU" id="27045"/>
<dbReference type="Ensembl" id="ENSMUST00000111289.8">
    <molecule id="Q8VDK1-2"/>
    <property type="protein sequence ID" value="ENSMUSP00000106920.2"/>
    <property type="gene ID" value="ENSMUSG00000013997.11"/>
</dbReference>
<dbReference type="Ensembl" id="ENSMUST00000111295.8">
    <molecule id="Q8VDK1-1"/>
    <property type="protein sequence ID" value="ENSMUSP00000106926.2"/>
    <property type="gene ID" value="ENSMUSG00000013997.11"/>
</dbReference>
<dbReference type="GeneID" id="27045"/>
<dbReference type="KEGG" id="mmu:27045"/>
<dbReference type="UCSC" id="uc007doa.2">
    <molecule id="Q8VDK1-1"/>
    <property type="organism name" value="mouse"/>
</dbReference>
<dbReference type="AGR" id="MGI:1350916"/>
<dbReference type="CTD" id="4817"/>
<dbReference type="MGI" id="MGI:1350916">
    <property type="gene designation" value="Nit1"/>
</dbReference>
<dbReference type="VEuPathDB" id="HostDB:ENSMUSG00000013997"/>
<dbReference type="eggNOG" id="KOG0807">
    <property type="taxonomic scope" value="Eukaryota"/>
</dbReference>
<dbReference type="GeneTree" id="ENSGT00550000075099"/>
<dbReference type="HOGENOM" id="CLU_030130_1_2_1"/>
<dbReference type="InParanoid" id="Q8VDK1"/>
<dbReference type="OMA" id="MRVAVCQ"/>
<dbReference type="OrthoDB" id="8531at9989"/>
<dbReference type="PhylomeDB" id="Q8VDK1"/>
<dbReference type="TreeFam" id="TF313080"/>
<dbReference type="BRENDA" id="3.5.1.128">
    <property type="organism ID" value="3474"/>
</dbReference>
<dbReference type="BioGRID-ORCS" id="27045">
    <property type="hits" value="3 hits in 78 CRISPR screens"/>
</dbReference>
<dbReference type="ChiTaRS" id="Nit1">
    <property type="organism name" value="mouse"/>
</dbReference>
<dbReference type="PRO" id="PR:Q8VDK1"/>
<dbReference type="Proteomes" id="UP000000589">
    <property type="component" value="Chromosome 1"/>
</dbReference>
<dbReference type="RNAct" id="Q8VDK1">
    <property type="molecule type" value="protein"/>
</dbReference>
<dbReference type="Bgee" id="ENSMUSG00000013997">
    <property type="expression patterns" value="Expressed in right kidney and 265 other cell types or tissues"/>
</dbReference>
<dbReference type="ExpressionAtlas" id="Q8VDK1">
    <property type="expression patterns" value="baseline and differential"/>
</dbReference>
<dbReference type="GO" id="GO:0005737">
    <property type="term" value="C:cytoplasm"/>
    <property type="evidence" value="ECO:0000314"/>
    <property type="project" value="UniProtKB"/>
</dbReference>
<dbReference type="GO" id="GO:0005739">
    <property type="term" value="C:mitochondrion"/>
    <property type="evidence" value="ECO:0000314"/>
    <property type="project" value="UniProtKB"/>
</dbReference>
<dbReference type="GO" id="GO:0050406">
    <property type="term" value="F:[acetyl-CoA carboxylase]-phosphatase activity"/>
    <property type="evidence" value="ECO:0007669"/>
    <property type="project" value="RHEA"/>
</dbReference>
<dbReference type="GO" id="GO:0110050">
    <property type="term" value="F:deaminated glutathione amidase activity"/>
    <property type="evidence" value="ECO:0000314"/>
    <property type="project" value="UniProtKB"/>
</dbReference>
<dbReference type="GO" id="GO:0043605">
    <property type="term" value="P:amide catabolic process"/>
    <property type="evidence" value="ECO:0000314"/>
    <property type="project" value="UniProtKB"/>
</dbReference>
<dbReference type="CDD" id="cd07572">
    <property type="entry name" value="nit"/>
    <property type="match status" value="1"/>
</dbReference>
<dbReference type="FunFam" id="3.60.110.10:FF:000005">
    <property type="entry name" value="nitrilase homolog 1 isoform X1"/>
    <property type="match status" value="1"/>
</dbReference>
<dbReference type="Gene3D" id="3.60.110.10">
    <property type="entry name" value="Carbon-nitrogen hydrolase"/>
    <property type="match status" value="1"/>
</dbReference>
<dbReference type="InterPro" id="IPR003010">
    <property type="entry name" value="C-N_Hydrolase"/>
</dbReference>
<dbReference type="InterPro" id="IPR036526">
    <property type="entry name" value="C-N_Hydrolase_sf"/>
</dbReference>
<dbReference type="InterPro" id="IPR045254">
    <property type="entry name" value="Nit1/2_C-N_Hydrolase"/>
</dbReference>
<dbReference type="InterPro" id="IPR001110">
    <property type="entry name" value="UPF0012_CS"/>
</dbReference>
<dbReference type="PANTHER" id="PTHR23088:SF27">
    <property type="entry name" value="DEAMINATED GLUTATHIONE AMIDASE"/>
    <property type="match status" value="1"/>
</dbReference>
<dbReference type="PANTHER" id="PTHR23088">
    <property type="entry name" value="NITRILASE-RELATED"/>
    <property type="match status" value="1"/>
</dbReference>
<dbReference type="Pfam" id="PF00795">
    <property type="entry name" value="CN_hydrolase"/>
    <property type="match status" value="1"/>
</dbReference>
<dbReference type="SUPFAM" id="SSF56317">
    <property type="entry name" value="Carbon-nitrogen hydrolase"/>
    <property type="match status" value="1"/>
</dbReference>
<dbReference type="PROSITE" id="PS50263">
    <property type="entry name" value="CN_HYDROLASE"/>
    <property type="match status" value="1"/>
</dbReference>
<dbReference type="PROSITE" id="PS01227">
    <property type="entry name" value="UPF0012"/>
    <property type="match status" value="1"/>
</dbReference>
<evidence type="ECO:0000255" key="1"/>
<evidence type="ECO:0000255" key="2">
    <source>
        <dbReference type="PROSITE-ProRule" id="PRU00054"/>
    </source>
</evidence>
<evidence type="ECO:0000269" key="3">
    <source>
    </source>
</evidence>
<evidence type="ECO:0000269" key="4">
    <source>
    </source>
</evidence>
<evidence type="ECO:0000269" key="5">
    <source>
    </source>
</evidence>
<evidence type="ECO:0000269" key="6">
    <source>
    </source>
</evidence>
<evidence type="ECO:0000269" key="7">
    <source>
    </source>
</evidence>
<evidence type="ECO:0000269" key="8">
    <source>
    </source>
</evidence>
<evidence type="ECO:0000269" key="9">
    <source>
    </source>
</evidence>
<evidence type="ECO:0000303" key="10">
    <source>
    </source>
</evidence>
<evidence type="ECO:0000305" key="11"/>
<sequence length="323" mass="35705">MLGFITRPPHQLLCTGYRLLRTPVLCTQPRPRTMSSSTSWELPLVAVCQVTSTPNKQENFKTCAELVQEAARLGACLAFLPEAFDFIARNPAETLLLSEPLNGDLLGQYSQLARECGIWLSLGGFHERGQDWEQNQKIYNCHVLLNSKGSVVASYRKTHLCDVEIPGQGPMRESNYTKPGGTLEPPVKTPAGKVGLAICYDMRFPELSLKLAQAGAEILTYPSAFGSVTGPAHWEVLLRARAIESQCYVIAAAQCGRHHETRASYGHSMVVDPWGTVVARCSEGPGLCLARIDLHFLQQMRQHLPVFQHRRPDLYGSLGHPLS</sequence>
<proteinExistence type="evidence at protein level"/>
<accession>Q8VDK1</accession>
<accession>O88526</accession>
<accession>Q9R1N4</accession>
<feature type="transit peptide" description="Mitochondrion" evidence="1">
    <location>
        <begin position="1"/>
        <end position="33"/>
    </location>
</feature>
<feature type="chain" id="PRO_0000213252" description="Deaminated glutathione amidase" evidence="1">
    <location>
        <begin position="34"/>
        <end position="323"/>
    </location>
</feature>
<feature type="domain" description="CN hydrolase" evidence="2">
    <location>
        <begin position="42"/>
        <end position="294"/>
    </location>
</feature>
<feature type="active site" description="Proton acceptor" evidence="2">
    <location>
        <position position="82"/>
    </location>
</feature>
<feature type="active site" description="Proton donor" evidence="2">
    <location>
        <position position="157"/>
    </location>
</feature>
<feature type="active site" description="Nucleophile" evidence="2">
    <location>
        <position position="199"/>
    </location>
</feature>
<feature type="splice variant" id="VSP_011548" description="In isoform 2." evidence="11">
    <location>
        <begin position="1"/>
        <end position="33"/>
    </location>
</feature>
<feature type="sequence conflict" description="In Ref. 1; AAC40184." evidence="11" ref="1">
    <original>T</original>
    <variation>I</variation>
    <location>
        <position position="22"/>
    </location>
</feature>
<feature type="sequence conflict" description="In Ref. 2; AAH21634." evidence="11" ref="2">
    <original>P</original>
    <variation>S</variation>
    <location>
        <position position="222"/>
    </location>
</feature>
<reference key="1">
    <citation type="journal article" date="1998" name="Proc. Natl. Acad. Sci. U.S.A.">
        <title>Nitrilase and Fhit homologs are encoded as fusion proteins in Drosophila melanogaster and Caenorhabditis elegans.</title>
        <authorList>
            <person name="Pekarsky Y."/>
            <person name="Campiglio M."/>
            <person name="Siprashvili Z."/>
            <person name="Druck T."/>
            <person name="Sedkov Y."/>
            <person name="Tillib S."/>
            <person name="Draganescu A."/>
            <person name="Wermuth P."/>
            <person name="Rothman J.H."/>
            <person name="Huebner K."/>
            <person name="Buchberg A.M."/>
            <person name="Mazo A."/>
            <person name="Brenner C."/>
            <person name="Croce C.M."/>
        </authorList>
    </citation>
    <scope>NUCLEOTIDE SEQUENCE [GENOMIC DNA]</scope>
    <scope>TISSUE SPECIFICITY</scope>
</reference>
<reference key="2">
    <citation type="journal article" date="2004" name="Genome Res.">
        <title>The status, quality, and expansion of the NIH full-length cDNA project: the Mammalian Gene Collection (MGC).</title>
        <authorList>
            <consortium name="The MGC Project Team"/>
        </authorList>
    </citation>
    <scope>NUCLEOTIDE SEQUENCE [LARGE SCALE MRNA] (ISOFORM 1)</scope>
    <source>
        <tissue>Mammary gland</tissue>
    </source>
</reference>
<reference key="3">
    <citation type="journal article" date="2006" name="J. Biol. Chem.">
        <title>Biological functions of mammalian Nit1, the counterpart of the invertebrate NitFhit Rosetta stone protein, a possible tumor suppressor.</title>
        <authorList>
            <person name="Semba S."/>
            <person name="Han S.-Y."/>
            <person name="Qin H.R."/>
            <person name="McCorkell K.A."/>
            <person name="Iliopoulos D."/>
            <person name="Pekarsky Y."/>
            <person name="Druck T."/>
            <person name="Trapasso F."/>
            <person name="Croce C.M."/>
            <person name="Huebner K."/>
        </authorList>
    </citation>
    <scope>FUNCTION</scope>
    <scope>DISRUPTION PHENOTYPE</scope>
    <scope>TISSUE SPECIFICITY</scope>
</reference>
<reference key="4">
    <citation type="journal article" date="2009" name="Biochimie">
        <title>Molecular identification of omega-amidase, the enzyme that is functionally coupled with glutamine transaminases, as the putative tumor suppressor Nit2.</title>
        <authorList>
            <person name="Jaisson S."/>
            <person name="Veiga-da-Cunha M."/>
            <person name="Van Schaftingen E."/>
        </authorList>
    </citation>
    <scope>FUNCTION</scope>
</reference>
<reference key="5">
    <citation type="journal article" date="2009" name="Biochimie">
        <title>Identification of the putative tumor suppressor Nit2 as omega-amidase, an enzyme metabolically linked to glutamine and asparagine transamination.</title>
        <authorList>
            <person name="Krasnikov B.F."/>
            <person name="Chien C.-H."/>
            <person name="Nostramo R."/>
            <person name="Pinto J.T."/>
            <person name="Nieves E."/>
            <person name="Callaway M."/>
            <person name="Sun J."/>
            <person name="Huebner K."/>
            <person name="Cooper A.J.L."/>
        </authorList>
    </citation>
    <scope>FUNCTION</scope>
</reference>
<reference key="6">
    <citation type="journal article" date="2009" name="Int. Immunol.">
        <title>Mammalian nitrilase 1 homologue Nit1 is a negative regulator in T cells.</title>
        <authorList>
            <person name="Zhang H."/>
            <person name="Hou Y.-J."/>
            <person name="Han S.-Y."/>
            <person name="Zhang E.C."/>
            <person name="Huebner K."/>
            <person name="Zhang J."/>
        </authorList>
    </citation>
    <scope>FUNCTION</scope>
    <scope>DISRUPTION PHENOTYPE</scope>
</reference>
<reference key="7">
    <citation type="journal article" date="2009" name="J. Cell. Biochem.">
        <title>Nit1 and Fhit tumor suppressor activities are additive.</title>
        <authorList>
            <person name="Sun J."/>
            <person name="Okumura H."/>
            <person name="Yearsley M."/>
            <person name="Frankel W."/>
            <person name="Fong L.Y."/>
            <person name="Druck T."/>
            <person name="Huebner K."/>
        </authorList>
    </citation>
    <scope>FUNCTION</scope>
    <scope>SUBCELLULAR LOCATION</scope>
</reference>
<reference key="8">
    <citation type="journal article" date="2010" name="Cell">
        <title>A tissue-specific atlas of mouse protein phosphorylation and expression.</title>
        <authorList>
            <person name="Huttlin E.L."/>
            <person name="Jedrychowski M.P."/>
            <person name="Elias J.E."/>
            <person name="Goswami T."/>
            <person name="Rad R."/>
            <person name="Beausoleil S.A."/>
            <person name="Villen J."/>
            <person name="Haas W."/>
            <person name="Sowa M.E."/>
            <person name="Gygi S.P."/>
        </authorList>
    </citation>
    <scope>IDENTIFICATION BY MASS SPECTROMETRY [LARGE SCALE ANALYSIS]</scope>
    <source>
        <tissue>Brain</tissue>
        <tissue>Brown adipose tissue</tissue>
        <tissue>Heart</tissue>
        <tissue>Kidney</tissue>
        <tissue>Liver</tissue>
        <tissue>Lung</tissue>
        <tissue>Pancreas</tissue>
        <tissue>Spleen</tissue>
        <tissue>Testis</tissue>
    </source>
</reference>
<reference key="9">
    <citation type="journal article" date="2017" name="Proc. Natl. Acad. Sci. U.S.A.">
        <title>Nit1 is a metabolite repair enzyme that hydrolyzes deaminated glutathione.</title>
        <authorList>
            <person name="Peracchi A."/>
            <person name="Veiga-da-Cunha M."/>
            <person name="Kuhara T."/>
            <person name="Ellens K.W."/>
            <person name="Paczia N."/>
            <person name="Stroobant V."/>
            <person name="Seliga A.K."/>
            <person name="Marlaire S."/>
            <person name="Jaisson S."/>
            <person name="Bommer G.T."/>
            <person name="Sun J."/>
            <person name="Huebner K."/>
            <person name="Linster C.L."/>
            <person name="Cooper A.J.L."/>
            <person name="Van Schaftingen E."/>
        </authorList>
    </citation>
    <scope>FUNCTION</scope>
    <scope>CATALYTIC ACTIVITY</scope>
    <scope>BIOPHYSICOCHEMICAL PROPERTIES</scope>
    <scope>SUBCELLULAR LOCATION (ISOFORMS 1 AND 2)</scope>
</reference>